<gene>
    <name evidence="1" type="primary">ybeY</name>
    <name type="ordered locus">Dshi_1015</name>
</gene>
<name>YBEY_DINSH</name>
<feature type="chain" id="PRO_0000336011" description="Endoribonuclease YbeY">
    <location>
        <begin position="1"/>
        <end position="181"/>
    </location>
</feature>
<feature type="binding site" evidence="1">
    <location>
        <position position="140"/>
    </location>
    <ligand>
        <name>Zn(2+)</name>
        <dbReference type="ChEBI" id="CHEBI:29105"/>
        <note>catalytic</note>
    </ligand>
</feature>
<feature type="binding site" evidence="1">
    <location>
        <position position="144"/>
    </location>
    <ligand>
        <name>Zn(2+)</name>
        <dbReference type="ChEBI" id="CHEBI:29105"/>
        <note>catalytic</note>
    </ligand>
</feature>
<feature type="binding site" evidence="1">
    <location>
        <position position="150"/>
    </location>
    <ligand>
        <name>Zn(2+)</name>
        <dbReference type="ChEBI" id="CHEBI:29105"/>
        <note>catalytic</note>
    </ligand>
</feature>
<dbReference type="EC" id="3.1.-.-" evidence="1"/>
<dbReference type="EMBL" id="CP000830">
    <property type="protein sequence ID" value="ABV92757.1"/>
    <property type="molecule type" value="Genomic_DNA"/>
</dbReference>
<dbReference type="RefSeq" id="WP_012177688.1">
    <property type="nucleotide sequence ID" value="NC_009952.1"/>
</dbReference>
<dbReference type="SMR" id="A8LSE3"/>
<dbReference type="STRING" id="398580.Dshi_1015"/>
<dbReference type="KEGG" id="dsh:Dshi_1015"/>
<dbReference type="eggNOG" id="COG0319">
    <property type="taxonomic scope" value="Bacteria"/>
</dbReference>
<dbReference type="HOGENOM" id="CLU_106710_0_0_5"/>
<dbReference type="OrthoDB" id="9807740at2"/>
<dbReference type="Proteomes" id="UP000006833">
    <property type="component" value="Chromosome"/>
</dbReference>
<dbReference type="GO" id="GO:0005737">
    <property type="term" value="C:cytoplasm"/>
    <property type="evidence" value="ECO:0007669"/>
    <property type="project" value="UniProtKB-SubCell"/>
</dbReference>
<dbReference type="GO" id="GO:0004222">
    <property type="term" value="F:metalloendopeptidase activity"/>
    <property type="evidence" value="ECO:0007669"/>
    <property type="project" value="InterPro"/>
</dbReference>
<dbReference type="GO" id="GO:0004521">
    <property type="term" value="F:RNA endonuclease activity"/>
    <property type="evidence" value="ECO:0007669"/>
    <property type="project" value="UniProtKB-UniRule"/>
</dbReference>
<dbReference type="GO" id="GO:0008270">
    <property type="term" value="F:zinc ion binding"/>
    <property type="evidence" value="ECO:0007669"/>
    <property type="project" value="UniProtKB-UniRule"/>
</dbReference>
<dbReference type="GO" id="GO:0006364">
    <property type="term" value="P:rRNA processing"/>
    <property type="evidence" value="ECO:0007669"/>
    <property type="project" value="UniProtKB-UniRule"/>
</dbReference>
<dbReference type="Gene3D" id="3.40.390.30">
    <property type="entry name" value="Metalloproteases ('zincins'), catalytic domain"/>
    <property type="match status" value="1"/>
</dbReference>
<dbReference type="HAMAP" id="MF_00009">
    <property type="entry name" value="Endoribonucl_YbeY"/>
    <property type="match status" value="1"/>
</dbReference>
<dbReference type="InterPro" id="IPR023091">
    <property type="entry name" value="MetalPrtase_cat_dom_sf_prd"/>
</dbReference>
<dbReference type="InterPro" id="IPR002036">
    <property type="entry name" value="YbeY"/>
</dbReference>
<dbReference type="InterPro" id="IPR020549">
    <property type="entry name" value="YbeY_CS"/>
</dbReference>
<dbReference type="NCBIfam" id="TIGR00043">
    <property type="entry name" value="rRNA maturation RNase YbeY"/>
    <property type="match status" value="1"/>
</dbReference>
<dbReference type="PANTHER" id="PTHR46986">
    <property type="entry name" value="ENDORIBONUCLEASE YBEY, CHLOROPLASTIC"/>
    <property type="match status" value="1"/>
</dbReference>
<dbReference type="PANTHER" id="PTHR46986:SF1">
    <property type="entry name" value="ENDORIBONUCLEASE YBEY, CHLOROPLASTIC"/>
    <property type="match status" value="1"/>
</dbReference>
<dbReference type="Pfam" id="PF02130">
    <property type="entry name" value="YbeY"/>
    <property type="match status" value="1"/>
</dbReference>
<dbReference type="SUPFAM" id="SSF55486">
    <property type="entry name" value="Metalloproteases ('zincins'), catalytic domain"/>
    <property type="match status" value="1"/>
</dbReference>
<dbReference type="PROSITE" id="PS01306">
    <property type="entry name" value="UPF0054"/>
    <property type="match status" value="1"/>
</dbReference>
<proteinExistence type="inferred from homology"/>
<sequence length="181" mass="19034">MTPTIRPDDPARATVEIATEDAAWDALDLEALAGRAVDATLVALDLPPAAFEVSILACDDARIATLNGEFRGKPTPTNVLSWPAEDRAPDTPGGAPHLPDPGDPMAAELGDLALAHGTCAREAAEAGKPLADHVTHLIVHGTLHLLGFDHETDADAARMEGLEVKILQTLNMANPYETPMV</sequence>
<comment type="function">
    <text evidence="1">Single strand-specific metallo-endoribonuclease involved in late-stage 70S ribosome quality control and in maturation of the 3' terminus of the 16S rRNA.</text>
</comment>
<comment type="cofactor">
    <cofactor evidence="1">
        <name>Zn(2+)</name>
        <dbReference type="ChEBI" id="CHEBI:29105"/>
    </cofactor>
    <text evidence="1">Binds 1 zinc ion.</text>
</comment>
<comment type="subcellular location">
    <subcellularLocation>
        <location evidence="1">Cytoplasm</location>
    </subcellularLocation>
</comment>
<comment type="similarity">
    <text evidence="1">Belongs to the endoribonuclease YbeY family.</text>
</comment>
<organism>
    <name type="scientific">Dinoroseobacter shibae (strain DSM 16493 / NCIMB 14021 / DFL 12)</name>
    <dbReference type="NCBI Taxonomy" id="398580"/>
    <lineage>
        <taxon>Bacteria</taxon>
        <taxon>Pseudomonadati</taxon>
        <taxon>Pseudomonadota</taxon>
        <taxon>Alphaproteobacteria</taxon>
        <taxon>Rhodobacterales</taxon>
        <taxon>Roseobacteraceae</taxon>
        <taxon>Dinoroseobacter</taxon>
    </lineage>
</organism>
<evidence type="ECO:0000255" key="1">
    <source>
        <dbReference type="HAMAP-Rule" id="MF_00009"/>
    </source>
</evidence>
<reference key="1">
    <citation type="journal article" date="2010" name="ISME J.">
        <title>The complete genome sequence of the algal symbiont Dinoroseobacter shibae: a hitchhiker's guide to life in the sea.</title>
        <authorList>
            <person name="Wagner-Dobler I."/>
            <person name="Ballhausen B."/>
            <person name="Berger M."/>
            <person name="Brinkhoff T."/>
            <person name="Buchholz I."/>
            <person name="Bunk B."/>
            <person name="Cypionka H."/>
            <person name="Daniel R."/>
            <person name="Drepper T."/>
            <person name="Gerdts G."/>
            <person name="Hahnke S."/>
            <person name="Han C."/>
            <person name="Jahn D."/>
            <person name="Kalhoefer D."/>
            <person name="Kiss H."/>
            <person name="Klenk H.P."/>
            <person name="Kyrpides N."/>
            <person name="Liebl W."/>
            <person name="Liesegang H."/>
            <person name="Meincke L."/>
            <person name="Pati A."/>
            <person name="Petersen J."/>
            <person name="Piekarski T."/>
            <person name="Pommerenke C."/>
            <person name="Pradella S."/>
            <person name="Pukall R."/>
            <person name="Rabus R."/>
            <person name="Stackebrandt E."/>
            <person name="Thole S."/>
            <person name="Thompson L."/>
            <person name="Tielen P."/>
            <person name="Tomasch J."/>
            <person name="von Jan M."/>
            <person name="Wanphrut N."/>
            <person name="Wichels A."/>
            <person name="Zech H."/>
            <person name="Simon M."/>
        </authorList>
    </citation>
    <scope>NUCLEOTIDE SEQUENCE [LARGE SCALE GENOMIC DNA]</scope>
    <source>
        <strain>DSM 16493 / NCIMB 14021 / DFL 12</strain>
    </source>
</reference>
<accession>A8LSE3</accession>
<keyword id="KW-0963">Cytoplasm</keyword>
<keyword id="KW-0255">Endonuclease</keyword>
<keyword id="KW-0378">Hydrolase</keyword>
<keyword id="KW-0479">Metal-binding</keyword>
<keyword id="KW-0540">Nuclease</keyword>
<keyword id="KW-1185">Reference proteome</keyword>
<keyword id="KW-0690">Ribosome biogenesis</keyword>
<keyword id="KW-0698">rRNA processing</keyword>
<keyword id="KW-0862">Zinc</keyword>
<protein>
    <recommendedName>
        <fullName evidence="1">Endoribonuclease YbeY</fullName>
        <ecNumber evidence="1">3.1.-.-</ecNumber>
    </recommendedName>
</protein>